<organism>
    <name type="scientific">Danio rerio</name>
    <name type="common">Zebrafish</name>
    <name type="synonym">Brachydanio rerio</name>
    <dbReference type="NCBI Taxonomy" id="7955"/>
    <lineage>
        <taxon>Eukaryota</taxon>
        <taxon>Metazoa</taxon>
        <taxon>Chordata</taxon>
        <taxon>Craniata</taxon>
        <taxon>Vertebrata</taxon>
        <taxon>Euteleostomi</taxon>
        <taxon>Actinopterygii</taxon>
        <taxon>Neopterygii</taxon>
        <taxon>Teleostei</taxon>
        <taxon>Ostariophysi</taxon>
        <taxon>Cypriniformes</taxon>
        <taxon>Danionidae</taxon>
        <taxon>Danioninae</taxon>
        <taxon>Danio</taxon>
    </lineage>
</organism>
<keyword id="KW-1185">Reference proteome</keyword>
<keyword id="KW-0677">Repeat</keyword>
<keyword id="KW-0833">Ubl conjugation pathway</keyword>
<keyword id="KW-0853">WD repeat</keyword>
<proteinExistence type="evidence at transcript level"/>
<sequence>MASFPDCVNENEIGKAKFIGELIPPVAPFDQKSGRETWTVAFAPDGSYFAWSQGHRIVRLVPWKKCLASFSVRKEDRSSGAGPRRLSRQNSEGSLLPGEPREHTIDCGDIVWGLAFGSSVPEKQSRCVNIEWHRFKFGQDQLLLATGLNNGRIKIWDVYTGKLLLNLMDHTDIVRDLTFAPDGSLVLVSASRDKTLRVWDLKDDGNMVKVLRGHQNWVYCSAFSPDSSVLCSVGAGKAVFLWDMDKYTLIRKLEGHHNDVVCCEFSPDGALLATASYDTRVIVWDPHTATVLLELGHLFPPPSPIFAGGANDRWVRSVAFCHDGRHIASVTDDRLVRFWSIDEKSPQAIGPLTNGLCCAFSTDGSVLSAGSRDGSVHFWASPRSIASLQHLCRMTLRRVMPTQQVYTLPIPFSMQDYLAYKTL</sequence>
<name>WSB1_DANRE</name>
<feature type="chain" id="PRO_0000347227" description="WD repeat and SOCS box-containing protein 1">
    <location>
        <begin position="1"/>
        <end position="423"/>
    </location>
</feature>
<feature type="repeat" description="WD 1">
    <location>
        <begin position="125"/>
        <end position="166"/>
    </location>
</feature>
<feature type="repeat" description="WD 2">
    <location>
        <begin position="169"/>
        <end position="209"/>
    </location>
</feature>
<feature type="repeat" description="WD 3">
    <location>
        <begin position="213"/>
        <end position="252"/>
    </location>
</feature>
<feature type="repeat" description="WD 4">
    <location>
        <begin position="255"/>
        <end position="294"/>
    </location>
</feature>
<feature type="repeat" description="WD 5">
    <location>
        <begin position="310"/>
        <end position="347"/>
    </location>
</feature>
<feature type="domain" description="SOCS box" evidence="2">
    <location>
        <begin position="373"/>
        <end position="423"/>
    </location>
</feature>
<feature type="region of interest" description="Disordered" evidence="3">
    <location>
        <begin position="76"/>
        <end position="100"/>
    </location>
</feature>
<reference key="1">
    <citation type="submission" date="2003-07" db="EMBL/GenBank/DDBJ databases">
        <authorList>
            <consortium name="NIH - Zebrafish Gene Collection (ZGC) project"/>
        </authorList>
    </citation>
    <scope>NUCLEOTIDE SEQUENCE [LARGE SCALE MRNA]</scope>
    <source>
        <tissue>Embryo</tissue>
    </source>
</reference>
<comment type="function">
    <text evidence="1">Probable substrate-recognition component of a SCF-like ECS (Elongin-Cullin-SOCS-box protein) E3 ubiquitin-protein ligase complex which mediates the ubiquitination and subsequent proteasomal degradation of target proteins.</text>
</comment>
<comment type="pathway">
    <text>Protein modification; protein ubiquitination.</text>
</comment>
<comment type="subunit">
    <text evidence="1">Component of a probable ECS E3 ubiquitin-protein ligase complex that contains the Elongin BC complex.</text>
</comment>
<comment type="domain">
    <text evidence="1">The SOCS box domain mediates the interaction with the Elongin BC complex, an adapter module in different E3 ubiquitin ligase complexes.</text>
</comment>
<gene>
    <name type="primary">wsb1</name>
</gene>
<evidence type="ECO:0000250" key="1"/>
<evidence type="ECO:0000255" key="2">
    <source>
        <dbReference type="PROSITE-ProRule" id="PRU00194"/>
    </source>
</evidence>
<evidence type="ECO:0000256" key="3">
    <source>
        <dbReference type="SAM" id="MobiDB-lite"/>
    </source>
</evidence>
<dbReference type="EMBL" id="BC054567">
    <property type="protein sequence ID" value="AAH54567.1"/>
    <property type="molecule type" value="mRNA"/>
</dbReference>
<dbReference type="RefSeq" id="NP_955927.1">
    <property type="nucleotide sequence ID" value="NM_199633.1"/>
</dbReference>
<dbReference type="SMR" id="Q7T2F6"/>
<dbReference type="FunCoup" id="Q7T2F6">
    <property type="interactions" value="217"/>
</dbReference>
<dbReference type="STRING" id="7955.ENSDARP00000005989"/>
<dbReference type="PaxDb" id="7955-ENSDARP00000005989"/>
<dbReference type="Ensembl" id="ENSDART00000008854">
    <property type="protein sequence ID" value="ENSDARP00000005989"/>
    <property type="gene ID" value="ENSDARG00000021343"/>
</dbReference>
<dbReference type="GeneID" id="323226"/>
<dbReference type="KEGG" id="dre:323226"/>
<dbReference type="AGR" id="ZFIN:ZDB-GENE-030131-1946"/>
<dbReference type="CTD" id="26118"/>
<dbReference type="ZFIN" id="ZDB-GENE-030131-1946">
    <property type="gene designation" value="wsb1"/>
</dbReference>
<dbReference type="eggNOG" id="KOG0266">
    <property type="taxonomic scope" value="Eukaryota"/>
</dbReference>
<dbReference type="HOGENOM" id="CLU_056876_0_0_1"/>
<dbReference type="InParanoid" id="Q7T2F6"/>
<dbReference type="OMA" id="YVWDPHT"/>
<dbReference type="OrthoDB" id="538223at2759"/>
<dbReference type="PhylomeDB" id="Q7T2F6"/>
<dbReference type="TreeFam" id="TF329216"/>
<dbReference type="Reactome" id="R-DRE-8951664">
    <property type="pathway name" value="Neddylation"/>
</dbReference>
<dbReference type="Reactome" id="R-DRE-983168">
    <property type="pathway name" value="Antigen processing: Ubiquitination &amp; Proteasome degradation"/>
</dbReference>
<dbReference type="UniPathway" id="UPA00143"/>
<dbReference type="PRO" id="PR:Q7T2F6"/>
<dbReference type="Proteomes" id="UP000000437">
    <property type="component" value="Chromosome 15"/>
</dbReference>
<dbReference type="Bgee" id="ENSDARG00000021343">
    <property type="expression patterns" value="Expressed in pharyngeal gill and 27 other cell types or tissues"/>
</dbReference>
<dbReference type="GO" id="GO:0035556">
    <property type="term" value="P:intracellular signal transduction"/>
    <property type="evidence" value="ECO:0007669"/>
    <property type="project" value="InterPro"/>
</dbReference>
<dbReference type="GO" id="GO:0000209">
    <property type="term" value="P:protein polyubiquitination"/>
    <property type="evidence" value="ECO:0000318"/>
    <property type="project" value="GO_Central"/>
</dbReference>
<dbReference type="CDD" id="cd03746">
    <property type="entry name" value="SOCS_WSB1_SWIP1"/>
    <property type="match status" value="1"/>
</dbReference>
<dbReference type="CDD" id="cd00200">
    <property type="entry name" value="WD40"/>
    <property type="match status" value="1"/>
</dbReference>
<dbReference type="Gene3D" id="1.10.750.20">
    <property type="entry name" value="SOCS box"/>
    <property type="match status" value="1"/>
</dbReference>
<dbReference type="Gene3D" id="2.130.10.10">
    <property type="entry name" value="YVTN repeat-like/Quinoprotein amine dehydrogenase"/>
    <property type="match status" value="2"/>
</dbReference>
<dbReference type="InterPro" id="IPR020472">
    <property type="entry name" value="G-protein_beta_WD-40_rep"/>
</dbReference>
<dbReference type="InterPro" id="IPR011045">
    <property type="entry name" value="N2O_reductase_N"/>
</dbReference>
<dbReference type="InterPro" id="IPR001496">
    <property type="entry name" value="SOCS_box"/>
</dbReference>
<dbReference type="InterPro" id="IPR036036">
    <property type="entry name" value="SOCS_box-like_dom_sf"/>
</dbReference>
<dbReference type="InterPro" id="IPR015943">
    <property type="entry name" value="WD40/YVTN_repeat-like_dom_sf"/>
</dbReference>
<dbReference type="InterPro" id="IPR019775">
    <property type="entry name" value="WD40_repeat_CS"/>
</dbReference>
<dbReference type="InterPro" id="IPR036322">
    <property type="entry name" value="WD40_repeat_dom_sf"/>
</dbReference>
<dbReference type="InterPro" id="IPR001680">
    <property type="entry name" value="WD40_rpt"/>
</dbReference>
<dbReference type="InterPro" id="IPR051983">
    <property type="entry name" value="WSB_SOCS-box_domain"/>
</dbReference>
<dbReference type="PANTHER" id="PTHR15622:SF12">
    <property type="entry name" value="WD REPEAT AND SOCS BOX-CONTAINING PROTEIN 1"/>
    <property type="match status" value="1"/>
</dbReference>
<dbReference type="PANTHER" id="PTHR15622">
    <property type="entry name" value="WD40 REPEAT PROTEIN"/>
    <property type="match status" value="1"/>
</dbReference>
<dbReference type="Pfam" id="PF07525">
    <property type="entry name" value="SOCS_box"/>
    <property type="match status" value="1"/>
</dbReference>
<dbReference type="Pfam" id="PF00400">
    <property type="entry name" value="WD40"/>
    <property type="match status" value="5"/>
</dbReference>
<dbReference type="PRINTS" id="PR00320">
    <property type="entry name" value="GPROTEINBRPT"/>
</dbReference>
<dbReference type="SMART" id="SM00253">
    <property type="entry name" value="SOCS"/>
    <property type="match status" value="1"/>
</dbReference>
<dbReference type="SMART" id="SM00969">
    <property type="entry name" value="SOCS_box"/>
    <property type="match status" value="1"/>
</dbReference>
<dbReference type="SMART" id="SM00320">
    <property type="entry name" value="WD40"/>
    <property type="match status" value="6"/>
</dbReference>
<dbReference type="SUPFAM" id="SSF50974">
    <property type="entry name" value="Nitrous oxide reductase, N-terminal domain"/>
    <property type="match status" value="1"/>
</dbReference>
<dbReference type="SUPFAM" id="SSF158235">
    <property type="entry name" value="SOCS box-like"/>
    <property type="match status" value="1"/>
</dbReference>
<dbReference type="SUPFAM" id="SSF50978">
    <property type="entry name" value="WD40 repeat-like"/>
    <property type="match status" value="1"/>
</dbReference>
<dbReference type="PROSITE" id="PS50225">
    <property type="entry name" value="SOCS"/>
    <property type="match status" value="1"/>
</dbReference>
<dbReference type="PROSITE" id="PS00678">
    <property type="entry name" value="WD_REPEATS_1"/>
    <property type="match status" value="2"/>
</dbReference>
<dbReference type="PROSITE" id="PS50082">
    <property type="entry name" value="WD_REPEATS_2"/>
    <property type="match status" value="6"/>
</dbReference>
<dbReference type="PROSITE" id="PS50294">
    <property type="entry name" value="WD_REPEATS_REGION"/>
    <property type="match status" value="1"/>
</dbReference>
<accession>Q7T2F6</accession>
<protein>
    <recommendedName>
        <fullName>WD repeat and SOCS box-containing protein 1</fullName>
        <shortName>WSB-1</shortName>
    </recommendedName>
</protein>